<sequence length="252" mass="28054">MTQPILQVSDLSVYYNKKKALKEVSMDFYPNEITALIGPSGSGKSTLLRAINRMGDLNPEVTLTGAVMYNGHNVYSPRTDTVELRKEIGMVFQQPNPFPMSVFENVVYGLRLKGIKDKATLDEAVETSLKGASIWDEVKDRLHDSALGLSGGQQQRVCIARTLATKPKIILLDEPTSALDPISAGKIEETLHGLKDQYTMLLVTRSMQQASRISDRTGFFLDGNLIEYGNTKEMFMNPKHKETEDYITGKFG</sequence>
<keyword id="KW-0067">ATP-binding</keyword>
<keyword id="KW-1003">Cell membrane</keyword>
<keyword id="KW-0472">Membrane</keyword>
<keyword id="KW-0547">Nucleotide-binding</keyword>
<keyword id="KW-0592">Phosphate transport</keyword>
<keyword id="KW-1278">Translocase</keyword>
<keyword id="KW-0813">Transport</keyword>
<name>PSTB1_STRA1</name>
<accession>Q3K199</accession>
<feature type="chain" id="PRO_0000272538" description="Phosphate import ATP-binding protein PstB 1">
    <location>
        <begin position="1"/>
        <end position="252"/>
    </location>
</feature>
<feature type="domain" description="ABC transporter" evidence="1">
    <location>
        <begin position="6"/>
        <end position="247"/>
    </location>
</feature>
<feature type="binding site" evidence="1">
    <location>
        <begin position="38"/>
        <end position="45"/>
    </location>
    <ligand>
        <name>ATP</name>
        <dbReference type="ChEBI" id="CHEBI:30616"/>
    </ligand>
</feature>
<organism>
    <name type="scientific">Streptococcus agalactiae serotype Ia (strain ATCC 27591 / A909 / CDC SS700)</name>
    <dbReference type="NCBI Taxonomy" id="205921"/>
    <lineage>
        <taxon>Bacteria</taxon>
        <taxon>Bacillati</taxon>
        <taxon>Bacillota</taxon>
        <taxon>Bacilli</taxon>
        <taxon>Lactobacillales</taxon>
        <taxon>Streptococcaceae</taxon>
        <taxon>Streptococcus</taxon>
    </lineage>
</organism>
<protein>
    <recommendedName>
        <fullName evidence="1">Phosphate import ATP-binding protein PstB 1</fullName>
        <ecNumber evidence="1">7.3.2.1</ecNumber>
    </recommendedName>
    <alternativeName>
        <fullName evidence="1">ABC phosphate transporter 1</fullName>
    </alternativeName>
    <alternativeName>
        <fullName evidence="1">Phosphate-transporting ATPase 1</fullName>
    </alternativeName>
</protein>
<gene>
    <name evidence="1" type="primary">pstB1</name>
    <name type="ordered locus">SAK_1083</name>
</gene>
<comment type="function">
    <text evidence="1">Part of the ABC transporter complex PstSACB involved in phosphate import. Responsible for energy coupling to the transport system.</text>
</comment>
<comment type="catalytic activity">
    <reaction evidence="1">
        <text>phosphate(out) + ATP + H2O = ADP + 2 phosphate(in) + H(+)</text>
        <dbReference type="Rhea" id="RHEA:24440"/>
        <dbReference type="ChEBI" id="CHEBI:15377"/>
        <dbReference type="ChEBI" id="CHEBI:15378"/>
        <dbReference type="ChEBI" id="CHEBI:30616"/>
        <dbReference type="ChEBI" id="CHEBI:43474"/>
        <dbReference type="ChEBI" id="CHEBI:456216"/>
        <dbReference type="EC" id="7.3.2.1"/>
    </reaction>
</comment>
<comment type="subunit">
    <text evidence="1">The complex is composed of two ATP-binding proteins (PstB), two transmembrane proteins (PstC and PstA) and a solute-binding protein (PstS).</text>
</comment>
<comment type="subcellular location">
    <subcellularLocation>
        <location evidence="1">Cell membrane</location>
        <topology evidence="1">Peripheral membrane protein</topology>
    </subcellularLocation>
</comment>
<comment type="similarity">
    <text evidence="1">Belongs to the ABC transporter superfamily. Phosphate importer (TC 3.A.1.7) family.</text>
</comment>
<comment type="sequence caution" evidence="2">
    <conflict type="erroneous initiation">
        <sequence resource="EMBL-CDS" id="ABA44952"/>
    </conflict>
</comment>
<dbReference type="EC" id="7.3.2.1" evidence="1"/>
<dbReference type="EMBL" id="CP000114">
    <property type="protein sequence ID" value="ABA44952.1"/>
    <property type="status" value="ALT_INIT"/>
    <property type="molecule type" value="Genomic_DNA"/>
</dbReference>
<dbReference type="SMR" id="Q3K199"/>
<dbReference type="KEGG" id="sak:SAK_1083"/>
<dbReference type="HOGENOM" id="CLU_000604_1_22_9"/>
<dbReference type="GO" id="GO:0005886">
    <property type="term" value="C:plasma membrane"/>
    <property type="evidence" value="ECO:0007669"/>
    <property type="project" value="UniProtKB-SubCell"/>
</dbReference>
<dbReference type="GO" id="GO:0005524">
    <property type="term" value="F:ATP binding"/>
    <property type="evidence" value="ECO:0007669"/>
    <property type="project" value="UniProtKB-KW"/>
</dbReference>
<dbReference type="GO" id="GO:0016887">
    <property type="term" value="F:ATP hydrolysis activity"/>
    <property type="evidence" value="ECO:0007669"/>
    <property type="project" value="InterPro"/>
</dbReference>
<dbReference type="GO" id="GO:0015415">
    <property type="term" value="F:ATPase-coupled phosphate ion transmembrane transporter activity"/>
    <property type="evidence" value="ECO:0007669"/>
    <property type="project" value="UniProtKB-EC"/>
</dbReference>
<dbReference type="GO" id="GO:0035435">
    <property type="term" value="P:phosphate ion transmembrane transport"/>
    <property type="evidence" value="ECO:0007669"/>
    <property type="project" value="InterPro"/>
</dbReference>
<dbReference type="CDD" id="cd03260">
    <property type="entry name" value="ABC_PstB_phosphate_transporter"/>
    <property type="match status" value="1"/>
</dbReference>
<dbReference type="Gene3D" id="3.40.50.300">
    <property type="entry name" value="P-loop containing nucleotide triphosphate hydrolases"/>
    <property type="match status" value="1"/>
</dbReference>
<dbReference type="InterPro" id="IPR003593">
    <property type="entry name" value="AAA+_ATPase"/>
</dbReference>
<dbReference type="InterPro" id="IPR003439">
    <property type="entry name" value="ABC_transporter-like_ATP-bd"/>
</dbReference>
<dbReference type="InterPro" id="IPR017871">
    <property type="entry name" value="ABC_transporter-like_CS"/>
</dbReference>
<dbReference type="InterPro" id="IPR027417">
    <property type="entry name" value="P-loop_NTPase"/>
</dbReference>
<dbReference type="InterPro" id="IPR005670">
    <property type="entry name" value="PstB-like"/>
</dbReference>
<dbReference type="NCBIfam" id="TIGR00972">
    <property type="entry name" value="3a0107s01c2"/>
    <property type="match status" value="1"/>
</dbReference>
<dbReference type="PANTHER" id="PTHR43423">
    <property type="entry name" value="ABC TRANSPORTER I FAMILY MEMBER 17"/>
    <property type="match status" value="1"/>
</dbReference>
<dbReference type="PANTHER" id="PTHR43423:SF1">
    <property type="entry name" value="ABC TRANSPORTER I FAMILY MEMBER 17"/>
    <property type="match status" value="1"/>
</dbReference>
<dbReference type="Pfam" id="PF00005">
    <property type="entry name" value="ABC_tran"/>
    <property type="match status" value="1"/>
</dbReference>
<dbReference type="SMART" id="SM00382">
    <property type="entry name" value="AAA"/>
    <property type="match status" value="1"/>
</dbReference>
<dbReference type="SUPFAM" id="SSF52540">
    <property type="entry name" value="P-loop containing nucleoside triphosphate hydrolases"/>
    <property type="match status" value="1"/>
</dbReference>
<dbReference type="PROSITE" id="PS00211">
    <property type="entry name" value="ABC_TRANSPORTER_1"/>
    <property type="match status" value="1"/>
</dbReference>
<dbReference type="PROSITE" id="PS50893">
    <property type="entry name" value="ABC_TRANSPORTER_2"/>
    <property type="match status" value="1"/>
</dbReference>
<dbReference type="PROSITE" id="PS51238">
    <property type="entry name" value="PSTB"/>
    <property type="match status" value="1"/>
</dbReference>
<evidence type="ECO:0000255" key="1">
    <source>
        <dbReference type="HAMAP-Rule" id="MF_01702"/>
    </source>
</evidence>
<evidence type="ECO:0000305" key="2"/>
<reference key="1">
    <citation type="journal article" date="2005" name="Proc. Natl. Acad. Sci. U.S.A.">
        <title>Genome analysis of multiple pathogenic isolates of Streptococcus agalactiae: implications for the microbial 'pan-genome'.</title>
        <authorList>
            <person name="Tettelin H."/>
            <person name="Masignani V."/>
            <person name="Cieslewicz M.J."/>
            <person name="Donati C."/>
            <person name="Medini D."/>
            <person name="Ward N.L."/>
            <person name="Angiuoli S.V."/>
            <person name="Crabtree J."/>
            <person name="Jones A.L."/>
            <person name="Durkin A.S."/>
            <person name="DeBoy R.T."/>
            <person name="Davidsen T.M."/>
            <person name="Mora M."/>
            <person name="Scarselli M."/>
            <person name="Margarit y Ros I."/>
            <person name="Peterson J.D."/>
            <person name="Hauser C.R."/>
            <person name="Sundaram J.P."/>
            <person name="Nelson W.C."/>
            <person name="Madupu R."/>
            <person name="Brinkac L.M."/>
            <person name="Dodson R.J."/>
            <person name="Rosovitz M.J."/>
            <person name="Sullivan S.A."/>
            <person name="Daugherty S.C."/>
            <person name="Haft D.H."/>
            <person name="Selengut J."/>
            <person name="Gwinn M.L."/>
            <person name="Zhou L."/>
            <person name="Zafar N."/>
            <person name="Khouri H."/>
            <person name="Radune D."/>
            <person name="Dimitrov G."/>
            <person name="Watkins K."/>
            <person name="O'Connor K.J."/>
            <person name="Smith S."/>
            <person name="Utterback T.R."/>
            <person name="White O."/>
            <person name="Rubens C.E."/>
            <person name="Grandi G."/>
            <person name="Madoff L.C."/>
            <person name="Kasper D.L."/>
            <person name="Telford J.L."/>
            <person name="Wessels M.R."/>
            <person name="Rappuoli R."/>
            <person name="Fraser C.M."/>
        </authorList>
    </citation>
    <scope>NUCLEOTIDE SEQUENCE [LARGE SCALE GENOMIC DNA]</scope>
    <source>
        <strain>ATCC 27591 / A909 / CDC SS700</strain>
    </source>
</reference>
<proteinExistence type="inferred from homology"/>